<organism>
    <name type="scientific">Escherichia coli</name>
    <dbReference type="NCBI Taxonomy" id="562"/>
    <lineage>
        <taxon>Bacteria</taxon>
        <taxon>Pseudomonadati</taxon>
        <taxon>Pseudomonadota</taxon>
        <taxon>Gammaproteobacteria</taxon>
        <taxon>Enterobacterales</taxon>
        <taxon>Enterobacteriaceae</taxon>
        <taxon>Escherichia</taxon>
    </lineage>
</organism>
<sequence length="802" mass="90393">MNQFYKKSHYSIQKHQITGLLFLLFIYPFSTSYGNEQFSFDSRFLPSGYNYSLNSNLPPEGEYLVDIYINKIKKESAIIPFYIKGNKLVPCLSKEKISSLGININNNDNTECVETSKAGISNISFEFSSLRLFIAVPKNLLSEIDKISSKDIDNGIHALFFNYQVNTRLANNKNRYDYISVSPNINYFSWRLRNLFEFNQNNDEKTWERNYTYLEKSFYDKKLNLVVGESYTNSNVYNNYSFTGISVSTDTDMYTPSEIDYTPEIHGVADSDSQIIVRQGNTIIINESVPAGPFSFPITNLMYTGGQLNVEITDIYGNKKQYTVNNSSLPVMRKAGLMVYNFISGKLTKKNSEDGDFFTQGDINYGTHYNSTLFGGYQFSKNYFNLSTGIGTDLGFSGAWLLHVSRSNFKNKNGYNINLQQNTQLRPFNAGVNFDYAYRKKRYVELSDIGWHGNLYNQLKNSFSLSLSKSLNKYGNFSLDYNKMKYWDNAYDSNSMSIRYFFKFMRAMITTNCSLNKYQSYEKKDKRFSINISLPLTKDYGHISSNYSFSNANTGTATSSVGLNGSFFNDARLNWNIQQNRTTRNNGYTDNTSYIATSYASPYGVFTGSYSGSNKYSSQFYSASGGIVLHSDGVAFTQKAGDTSALVRIDNISDIKIGNTPGVYTGYNGFALIPHLQPFKKNTILINDKGIPDGITLANIKKQVIPSRGAIVKVKFDAKKGNDILFKLTTKDGKTPPLGAIAHEKNGKQINTGIVDDDGMLYMSGLSGTGIINVTWNGKVCSFPFSEKDISSKQLSVVNKQC</sequence>
<keyword id="KW-0998">Cell outer membrane</keyword>
<keyword id="KW-1029">Fimbrium biogenesis</keyword>
<keyword id="KW-0472">Membrane</keyword>
<keyword id="KW-0732">Signal</keyword>
<keyword id="KW-0812">Transmembrane</keyword>
<keyword id="KW-1134">Transmembrane beta strand</keyword>
<keyword id="KW-0813">Transport</keyword>
<proteinExistence type="inferred from homology"/>
<dbReference type="EMBL" id="U04846">
    <property type="protein sequence ID" value="AAB51364.1"/>
    <property type="molecule type" value="Unassigned_DNA"/>
</dbReference>
<dbReference type="SMR" id="P53513"/>
<dbReference type="TCDB" id="1.B.11.3.4">
    <property type="family name" value="the outer membrane fimbrial usher porin (fup) family"/>
</dbReference>
<dbReference type="GO" id="GO:0009279">
    <property type="term" value="C:cell outer membrane"/>
    <property type="evidence" value="ECO:0007669"/>
    <property type="project" value="UniProtKB-SubCell"/>
</dbReference>
<dbReference type="GO" id="GO:0015473">
    <property type="term" value="F:fimbrial usher porin activity"/>
    <property type="evidence" value="ECO:0007669"/>
    <property type="project" value="InterPro"/>
</dbReference>
<dbReference type="GO" id="GO:0009297">
    <property type="term" value="P:pilus assembly"/>
    <property type="evidence" value="ECO:0007669"/>
    <property type="project" value="InterPro"/>
</dbReference>
<dbReference type="Gene3D" id="2.60.40.2070">
    <property type="match status" value="1"/>
</dbReference>
<dbReference type="Gene3D" id="2.60.40.3110">
    <property type="match status" value="1"/>
</dbReference>
<dbReference type="Gene3D" id="3.10.20.410">
    <property type="match status" value="1"/>
</dbReference>
<dbReference type="Gene3D" id="2.60.40.2610">
    <property type="entry name" value="Outer membrane usher protein FimD, plug domain"/>
    <property type="match status" value="1"/>
</dbReference>
<dbReference type="InterPro" id="IPR000015">
    <property type="entry name" value="Fimb_usher"/>
</dbReference>
<dbReference type="InterPro" id="IPR042186">
    <property type="entry name" value="FimD_plug_dom"/>
</dbReference>
<dbReference type="InterPro" id="IPR025949">
    <property type="entry name" value="PapC-like_C"/>
</dbReference>
<dbReference type="InterPro" id="IPR043142">
    <property type="entry name" value="PapC-like_C_sf"/>
</dbReference>
<dbReference type="InterPro" id="IPR025885">
    <property type="entry name" value="PapC_N"/>
</dbReference>
<dbReference type="InterPro" id="IPR037224">
    <property type="entry name" value="PapC_N_sf"/>
</dbReference>
<dbReference type="PANTHER" id="PTHR30451:SF21">
    <property type="entry name" value="FIMBRIAL USHER DOMAIN-CONTAINING PROTEIN YDET-RELATED"/>
    <property type="match status" value="1"/>
</dbReference>
<dbReference type="PANTHER" id="PTHR30451">
    <property type="entry name" value="OUTER MEMBRANE USHER PROTEIN"/>
    <property type="match status" value="1"/>
</dbReference>
<dbReference type="Pfam" id="PF13953">
    <property type="entry name" value="PapC_C"/>
    <property type="match status" value="1"/>
</dbReference>
<dbReference type="Pfam" id="PF13954">
    <property type="entry name" value="PapC_N"/>
    <property type="match status" value="1"/>
</dbReference>
<dbReference type="Pfam" id="PF00577">
    <property type="entry name" value="Usher"/>
    <property type="match status" value="1"/>
</dbReference>
<dbReference type="SUPFAM" id="SSF141729">
    <property type="entry name" value="FimD N-terminal domain-like"/>
    <property type="match status" value="1"/>
</dbReference>
<accession>P53513</accession>
<evidence type="ECO:0000250" key="1"/>
<evidence type="ECO:0000255" key="2"/>
<evidence type="ECO:0000305" key="3"/>
<protein>
    <recommendedName>
        <fullName>Outer membrane usher protein CssD</fullName>
    </recommendedName>
    <alternativeName>
        <fullName>CS6 fimbria usher protein</fullName>
    </alternativeName>
</protein>
<gene>
    <name type="primary">cssD</name>
</gene>
<name>CSSD2_ECOLX</name>
<reference key="1">
    <citation type="submission" date="1994-01" db="EMBL/GenBank/DDBJ databases">
        <authorList>
            <person name="Wolf M.K."/>
            <person name="de Haan L.A.M."/>
            <person name="Cassels F.C."/>
            <person name="Willshaw G.A."/>
            <person name="Gestel E.C.M."/>
            <person name="Gaastra W."/>
            <person name="Warren R."/>
            <person name="Boedeker E.C."/>
        </authorList>
    </citation>
    <scope>NUCLEOTIDE SEQUENCE [GENOMIC DNA]</scope>
    <source>
        <strain>E8775</strain>
    </source>
</reference>
<feature type="signal peptide" evidence="2">
    <location>
        <begin position="1"/>
        <end status="unknown"/>
    </location>
</feature>
<feature type="chain" id="PRO_0000009307" description="Outer membrane usher protein CssD">
    <location>
        <begin status="unknown"/>
        <end position="802"/>
    </location>
</feature>
<comment type="function">
    <text>Involved in the export and assembly of C6 fimbrial subunits across the outer membrane.</text>
</comment>
<comment type="subcellular location">
    <subcellularLocation>
        <location evidence="1">Cell outer membrane</location>
        <topology evidence="1">Multi-pass membrane protein</topology>
    </subcellularLocation>
</comment>
<comment type="similarity">
    <text evidence="3">Belongs to the fimbrial export usher family.</text>
</comment>